<gene>
    <name evidence="3" type="primary">pvcB</name>
    <name evidence="5" type="ordered locus">EAMY_1787</name>
</gene>
<comment type="function">
    <text evidence="2">Catalyzes the 2-oxoglutarate-dependent oxidation of tyrosine isonitrile.</text>
</comment>
<comment type="catalytic activity">
    <reaction evidence="2">
        <text>(2S)-3-(4-hydroxyphenyl)-2-isocyanopropanoate + 2-oxoglutarate + O2 = (2E)-3-(4-hydroxyphenyl)-2-isocyanoprop-2-enoate + succinate + CO2 + H2O</text>
        <dbReference type="Rhea" id="RHEA:56688"/>
        <dbReference type="ChEBI" id="CHEBI:15377"/>
        <dbReference type="ChEBI" id="CHEBI:15379"/>
        <dbReference type="ChEBI" id="CHEBI:16526"/>
        <dbReference type="ChEBI" id="CHEBI:16810"/>
        <dbReference type="ChEBI" id="CHEBI:30031"/>
        <dbReference type="ChEBI" id="CHEBI:140647"/>
        <dbReference type="ChEBI" id="CHEBI:140648"/>
        <dbReference type="EC" id="1.14.20.9"/>
    </reaction>
</comment>
<comment type="cofactor">
    <cofactor evidence="2">
        <name>Fe(2+)</name>
        <dbReference type="ChEBI" id="CHEBI:29033"/>
    </cofactor>
    <text evidence="1">Binds 1 Fe(2+) per subunit.</text>
</comment>
<comment type="biophysicochemical properties">
    <kinetics>
        <KM evidence="2">16 uM for tyrosine isonitrile</KM>
        <KM evidence="2">4.8 uM for 2-oxoglutarate</KM>
        <text evidence="2">kcat is 0.22 sec(-1).</text>
    </kinetics>
</comment>
<comment type="similarity">
    <text evidence="4">Belongs to the TfdA dioxygenase family.</text>
</comment>
<dbReference type="EC" id="1.14.20.9" evidence="2"/>
<dbReference type="EMBL" id="FN434113">
    <property type="protein sequence ID" value="CBA20737.1"/>
    <property type="molecule type" value="Genomic_DNA"/>
</dbReference>
<dbReference type="RefSeq" id="WP_004157574.1">
    <property type="nucleotide sequence ID" value="NC_013961.1"/>
</dbReference>
<dbReference type="SMR" id="D4I2N1"/>
<dbReference type="STRING" id="665029.EAMY_1787"/>
<dbReference type="KEGG" id="eam:EAMY_1787"/>
<dbReference type="PATRIC" id="fig|665029.3.peg.1722"/>
<dbReference type="eggNOG" id="COG2175">
    <property type="taxonomic scope" value="Bacteria"/>
</dbReference>
<dbReference type="HOGENOM" id="CLU_077936_0_0_6"/>
<dbReference type="OrthoDB" id="581608at2"/>
<dbReference type="BRENDA" id="1.14.20.9">
    <property type="organism ID" value="2136"/>
</dbReference>
<dbReference type="Proteomes" id="UP000001841">
    <property type="component" value="Chromosome"/>
</dbReference>
<dbReference type="GO" id="GO:0008336">
    <property type="term" value="F:gamma-butyrobetaine dioxygenase activity"/>
    <property type="evidence" value="ECO:0007669"/>
    <property type="project" value="UniProtKB-EC"/>
</dbReference>
<dbReference type="GO" id="GO:0046872">
    <property type="term" value="F:metal ion binding"/>
    <property type="evidence" value="ECO:0007669"/>
    <property type="project" value="UniProtKB-KW"/>
</dbReference>
<dbReference type="Gene3D" id="3.60.130.10">
    <property type="entry name" value="Clavaminate synthase-like"/>
    <property type="match status" value="1"/>
</dbReference>
<dbReference type="InterPro" id="IPR050411">
    <property type="entry name" value="AlphaKG_dependent_hydroxylases"/>
</dbReference>
<dbReference type="InterPro" id="IPR042098">
    <property type="entry name" value="TauD-like_sf"/>
</dbReference>
<dbReference type="InterPro" id="IPR003819">
    <property type="entry name" value="TauD/TfdA-like"/>
</dbReference>
<dbReference type="PANTHER" id="PTHR10696">
    <property type="entry name" value="GAMMA-BUTYROBETAINE HYDROXYLASE-RELATED"/>
    <property type="match status" value="1"/>
</dbReference>
<dbReference type="PANTHER" id="PTHR10696:SF53">
    <property type="entry name" value="TYROSINE ISONITRILE DESATURASE"/>
    <property type="match status" value="1"/>
</dbReference>
<dbReference type="Pfam" id="PF02668">
    <property type="entry name" value="TauD"/>
    <property type="match status" value="1"/>
</dbReference>
<dbReference type="SUPFAM" id="SSF51197">
    <property type="entry name" value="Clavaminate synthase-like"/>
    <property type="match status" value="1"/>
</dbReference>
<accession>D4I2N1</accession>
<protein>
    <recommendedName>
        <fullName evidence="4">Tyrosine isonitrile desaturase</fullName>
        <ecNumber evidence="2">1.14.20.9</ecNumber>
    </recommendedName>
    <alternativeName>
        <fullName evidence="3">EaPvcB</fullName>
    </alternativeName>
</protein>
<proteinExistence type="evidence at protein level"/>
<organism>
    <name type="scientific">Erwinia amylovora (strain CFBP1430)</name>
    <dbReference type="NCBI Taxonomy" id="665029"/>
    <lineage>
        <taxon>Bacteria</taxon>
        <taxon>Pseudomonadati</taxon>
        <taxon>Pseudomonadota</taxon>
        <taxon>Gammaproteobacteria</taxon>
        <taxon>Enterobacterales</taxon>
        <taxon>Erwiniaceae</taxon>
        <taxon>Erwinia</taxon>
    </lineage>
</organism>
<feature type="chain" id="PRO_0000453969" description="Tyrosine isonitrile desaturase">
    <location>
        <begin position="1"/>
        <end position="292"/>
    </location>
</feature>
<feature type="binding site" evidence="1">
    <location>
        <position position="110"/>
    </location>
    <ligand>
        <name>Fe cation</name>
        <dbReference type="ChEBI" id="CHEBI:24875"/>
        <note>catalytic</note>
    </ligand>
</feature>
<feature type="binding site" evidence="1">
    <location>
        <position position="112"/>
    </location>
    <ligand>
        <name>Fe cation</name>
        <dbReference type="ChEBI" id="CHEBI:24875"/>
        <note>catalytic</note>
    </ligand>
</feature>
<feature type="binding site" evidence="1">
    <location>
        <position position="259"/>
    </location>
    <ligand>
        <name>Fe cation</name>
        <dbReference type="ChEBI" id="CHEBI:24875"/>
        <note>catalytic</note>
    </ligand>
</feature>
<reference key="1">
    <citation type="journal article" date="2010" name="Mol. Plant Microbe Interact.">
        <title>Complete genome sequence of the fire blight pathogen Erwinia amylovora CFBP 1430 and comparison to other Erwinia spp.</title>
        <authorList>
            <person name="Smits T.H."/>
            <person name="Rezzonico F."/>
            <person name="Kamber T."/>
            <person name="Blom J."/>
            <person name="Goesmann A."/>
            <person name="Frey J.E."/>
            <person name="Duffy B."/>
        </authorList>
    </citation>
    <scope>NUCLEOTIDE SEQUENCE [LARGE SCALE GENOMIC DNA]</scope>
    <source>
        <strain>CFBP1430</strain>
    </source>
</reference>
<reference key="2">
    <citation type="journal article" date="2015" name="Biochemistry">
        <title>Examining reaction specificity in PvcB, a source of diversity in isonitrile-containing natural products.</title>
        <authorList>
            <person name="Zhu J."/>
            <person name="Lippa G.M."/>
            <person name="Gulick A.M."/>
            <person name="Tipton P.A."/>
        </authorList>
    </citation>
    <scope>FUNCTION</scope>
    <scope>CATALYTIC ACTIVITY</scope>
    <scope>COFACTOR</scope>
    <scope>BIOPHYSICOCHEMICAL PROPERTIES</scope>
</reference>
<name>PVCB_ERWAC</name>
<sequence>MNPADLPDTLDVAPLTGETGEPCSFGILIKPCRAGRHIGELSVTWLRALVYSHQLVVLRGFDHFASSDSLTRYCATFGEIMMWPYGAVLELVEHANPDDHIFANSYVPLHWDGMYLDTVPEFQLFQCVHAAGDMQGGRTTFSSTNAALRIATPAVRELWARAHGRYQRSVELYSNTVEAPIIGIHPLREFPVIRFCEPPDENDATFLNPSSYSFGGINKDEEEMLLVSLMKTLRDPRVYYAHQWQTGDFVLSDNLSLLHGREQYTHHSGRHLRRVHIHGRPQIANHHLVRSE</sequence>
<keyword id="KW-0408">Iron</keyword>
<keyword id="KW-0479">Metal-binding</keyword>
<keyword id="KW-0560">Oxidoreductase</keyword>
<evidence type="ECO:0000250" key="1">
    <source>
        <dbReference type="UniProtKB" id="Q9XB59"/>
    </source>
</evidence>
<evidence type="ECO:0000269" key="2">
    <source>
    </source>
</evidence>
<evidence type="ECO:0000303" key="3">
    <source>
    </source>
</evidence>
<evidence type="ECO:0000305" key="4"/>
<evidence type="ECO:0000312" key="5">
    <source>
        <dbReference type="EMBL" id="CBA20737.1"/>
    </source>
</evidence>